<dbReference type="EC" id="2.4.1.288" evidence="1"/>
<dbReference type="EMBL" id="CP000480">
    <property type="protein sequence ID" value="ABK72427.1"/>
    <property type="molecule type" value="Genomic_DNA"/>
</dbReference>
<dbReference type="EMBL" id="CP001663">
    <property type="protein sequence ID" value="AFP42661.1"/>
    <property type="molecule type" value="Genomic_DNA"/>
</dbReference>
<dbReference type="RefSeq" id="WP_011731265.1">
    <property type="nucleotide sequence ID" value="NZ_SIJM01000013.1"/>
</dbReference>
<dbReference type="RefSeq" id="YP_890616.1">
    <property type="nucleotide sequence ID" value="NC_008596.1"/>
</dbReference>
<dbReference type="SMR" id="A0R628"/>
<dbReference type="STRING" id="246196.MSMEG_6403"/>
<dbReference type="CAZy" id="GT2">
    <property type="family name" value="Glycosyltransferase Family 2"/>
</dbReference>
<dbReference type="PaxDb" id="246196-MSMEI_6235"/>
<dbReference type="KEGG" id="msb:LJ00_31650"/>
<dbReference type="KEGG" id="msg:MSMEI_6235"/>
<dbReference type="KEGG" id="msm:MSMEG_6403"/>
<dbReference type="PATRIC" id="fig|246196.19.peg.6229"/>
<dbReference type="eggNOG" id="COG1216">
    <property type="taxonomic scope" value="Bacteria"/>
</dbReference>
<dbReference type="OrthoDB" id="3225550at2"/>
<dbReference type="UniPathway" id="UPA00963"/>
<dbReference type="Proteomes" id="UP000000757">
    <property type="component" value="Chromosome"/>
</dbReference>
<dbReference type="Proteomes" id="UP000006158">
    <property type="component" value="Chromosome"/>
</dbReference>
<dbReference type="GO" id="GO:0005886">
    <property type="term" value="C:plasma membrane"/>
    <property type="evidence" value="ECO:0007669"/>
    <property type="project" value="UniProtKB-SubCell"/>
</dbReference>
<dbReference type="GO" id="GO:0016757">
    <property type="term" value="F:glycosyltransferase activity"/>
    <property type="evidence" value="ECO:0000250"/>
    <property type="project" value="UniProtKB"/>
</dbReference>
<dbReference type="GO" id="GO:0046872">
    <property type="term" value="F:metal ion binding"/>
    <property type="evidence" value="ECO:0007669"/>
    <property type="project" value="UniProtKB-KW"/>
</dbReference>
<dbReference type="GO" id="GO:0016740">
    <property type="term" value="F:transferase activity"/>
    <property type="evidence" value="ECO:0000250"/>
    <property type="project" value="UniProtKB"/>
</dbReference>
<dbReference type="GO" id="GO:0045227">
    <property type="term" value="P:capsule polysaccharide biosynthetic process"/>
    <property type="evidence" value="ECO:0007669"/>
    <property type="project" value="UniProtKB-UniPathway"/>
</dbReference>
<dbReference type="GO" id="GO:0044038">
    <property type="term" value="P:cell wall macromolecule biosynthetic process"/>
    <property type="evidence" value="ECO:0000250"/>
    <property type="project" value="UniProtKB"/>
</dbReference>
<dbReference type="GO" id="GO:0071555">
    <property type="term" value="P:cell wall organization"/>
    <property type="evidence" value="ECO:0000250"/>
    <property type="project" value="UniProtKB"/>
</dbReference>
<dbReference type="FunFam" id="3.90.550.60:FF:000001">
    <property type="entry name" value="UDP-galactofuranosyl transferase GlfT2"/>
    <property type="match status" value="1"/>
</dbReference>
<dbReference type="Gene3D" id="3.90.550.60">
    <property type="match status" value="1"/>
</dbReference>
<dbReference type="InterPro" id="IPR045699">
    <property type="entry name" value="GlfT2_C"/>
</dbReference>
<dbReference type="InterPro" id="IPR040492">
    <property type="entry name" value="GlfT2_N"/>
</dbReference>
<dbReference type="InterPro" id="IPR029044">
    <property type="entry name" value="Nucleotide-diphossugar_trans"/>
</dbReference>
<dbReference type="PANTHER" id="PTHR43179:SF12">
    <property type="entry name" value="GALACTOFURANOSYLTRANSFERASE GLFT2"/>
    <property type="match status" value="1"/>
</dbReference>
<dbReference type="PANTHER" id="PTHR43179">
    <property type="entry name" value="RHAMNOSYLTRANSFERASE WBBL"/>
    <property type="match status" value="1"/>
</dbReference>
<dbReference type="Pfam" id="PF19320">
    <property type="entry name" value="GlfT2_domain3"/>
    <property type="match status" value="1"/>
</dbReference>
<dbReference type="Pfam" id="PF17994">
    <property type="entry name" value="Glft2_N"/>
    <property type="match status" value="1"/>
</dbReference>
<dbReference type="Pfam" id="PF13641">
    <property type="entry name" value="Glyco_tranf_2_3"/>
    <property type="match status" value="1"/>
</dbReference>
<dbReference type="SUPFAM" id="SSF53448">
    <property type="entry name" value="Nucleotide-diphospho-sugar transferases"/>
    <property type="match status" value="1"/>
</dbReference>
<sequence length="646" mass="71573">MSDIPSGALEADESRAVSLLSRVILPRPGEPLDVRKLYIEESTTNSRRAHAPTRTSLEIGPESEVSFATYFNAFPASYWRRWSTLDTVVLRVELTGTARVDVYRSKATGARITVGGAPVAGEGDGPAAVEFEIDLTPFEDGGWIWFDITTNTAVRVHSAGWYAPVPAPGRANVAVGIPTFNRPADCVNALAALTSDPLVDEVISAVIVSDQGTSKAKDHPGFADAAARLGDRLSIHNQPNLGGSGGYSRVMYEALKNTDCEQILFMDDDIRIEPDSILRALAMNRFAKSPILVGGQMLNLQEPSHLHVMGEVVDRANFMWTAAPNAEYDHDFAKFKLSDAEEPRTKLLHRRVDVDFNGWWMCMIPRQIAEELGQPLPLFIKWDDAEYGLRAGEHGYGTVTLPGAAIWHMAWSDKDDAIDWQAYFHLRNRLVVAALHWDGPVSGLIASHLKATIKHLLCLEYSTVAIQNKAMEDFLAGPENLFSILESAMPDVRKLRSQYPDAVVLPGATSLPPASDMRRKKIAIPVSKPAIAVNLARGVVHQLRSHDPETHVRPQINVATQDARWFSLCRVDGVTVTTADGRGVVYRQRDRAKMFALLRASLRQQARLARKFDRMRKVYRDALPMLTSTQKWESVLLTETPEKVGR</sequence>
<evidence type="ECO:0000250" key="1">
    <source>
        <dbReference type="UniProtKB" id="O53585"/>
    </source>
</evidence>
<evidence type="ECO:0000305" key="2"/>
<organism>
    <name type="scientific">Mycolicibacterium smegmatis (strain ATCC 700084 / mc(2)155)</name>
    <name type="common">Mycobacterium smegmatis</name>
    <dbReference type="NCBI Taxonomy" id="246196"/>
    <lineage>
        <taxon>Bacteria</taxon>
        <taxon>Bacillati</taxon>
        <taxon>Actinomycetota</taxon>
        <taxon>Actinomycetes</taxon>
        <taxon>Mycobacteriales</taxon>
        <taxon>Mycobacteriaceae</taxon>
        <taxon>Mycolicibacterium</taxon>
    </lineage>
</organism>
<comment type="function">
    <text evidence="1">Involved in the galactan polymerization of the arabinogalactan (AG) region of the mycolylarabinogalactan-peptidoglycan (mAGP) complex, an essential component of the mycobacteria cell wall. Thus, successively transfers approximately 28 galactofuranosyl (Galf) residues from UDP-galactofuranose (UDP-Galf) onto the galactofuranosyl-galactofuranosyl-rhamnosyl-GlcNAc-diphospho-decaprenol (Galf-Galf-Rha-GlcNAc-PP-C50) acceptor produced by GlfT1, with alternating 1-&gt;5 and 1-&gt;6 links, forming a galactan domain with approximately 30 galactofuranosyl residues.</text>
</comment>
<comment type="catalytic activity">
    <reaction evidence="1">
        <text>beta-D-galactofuranosyl-(1-&gt;5)-beta-D-galactofuranosyl-(1-&gt;4)-alpha-L-rhamnosyl-(1-&gt;3)-N-acetyl-alpha-D-glucosaminyl-diphospho-trans,octa-cis-decaprenol + 28 UDP-alpha-D-galactofuranose = [beta-D-galactofuranosyl-(1-&gt;5)-beta-D-galactofuranosyl-(1-&gt;6)]14-beta-D-galactofuranosyl-(1-&gt;5)-beta-D-galactofuranosyl-(1-&gt;4)-alpha-L-rhamnopyranosyl-(1-&gt;3)-N-acetyl-alpha-D-glucosaminyl-diphospho-trans,octa-cis-decaprenol + 28 UDP + 28 H(+)</text>
        <dbReference type="Rhea" id="RHEA:34391"/>
        <dbReference type="ChEBI" id="CHEBI:15378"/>
        <dbReference type="ChEBI" id="CHEBI:58223"/>
        <dbReference type="ChEBI" id="CHEBI:66915"/>
        <dbReference type="ChEBI" id="CHEBI:67210"/>
        <dbReference type="ChEBI" id="CHEBI:67212"/>
        <dbReference type="EC" id="2.4.1.288"/>
    </reaction>
</comment>
<comment type="cofactor">
    <cofactor evidence="1">
        <name>Mn(2+)</name>
        <dbReference type="ChEBI" id="CHEBI:29035"/>
    </cofactor>
    <cofactor evidence="1">
        <name>Mg(2+)</name>
        <dbReference type="ChEBI" id="CHEBI:18420"/>
    </cofactor>
</comment>
<comment type="pathway">
    <text evidence="1">Cell wall biogenesis; cell wall polysaccharide biosynthesis.</text>
</comment>
<comment type="subunit">
    <text evidence="1">Homotetramer.</text>
</comment>
<comment type="subcellular location">
    <subcellularLocation>
        <location evidence="1">Cell membrane</location>
    </subcellularLocation>
</comment>
<comment type="similarity">
    <text evidence="2">Belongs to the glycosyltransferase 2 family.</text>
</comment>
<keyword id="KW-1003">Cell membrane</keyword>
<keyword id="KW-0961">Cell wall biogenesis/degradation</keyword>
<keyword id="KW-0328">Glycosyltransferase</keyword>
<keyword id="KW-0460">Magnesium</keyword>
<keyword id="KW-0464">Manganese</keyword>
<keyword id="KW-0472">Membrane</keyword>
<keyword id="KW-0479">Metal-binding</keyword>
<keyword id="KW-1185">Reference proteome</keyword>
<keyword id="KW-0808">Transferase</keyword>
<accession>A0R628</accession>
<accession>I7GFR0</accession>
<gene>
    <name evidence="1" type="primary">glfT2</name>
    <name type="ordered locus">MSMEG_6403</name>
    <name type="ordered locus">MSMEI_6235</name>
</gene>
<name>GLFT2_MYCS2</name>
<feature type="chain" id="PRO_0000395358" description="Galactofuranosyltransferase GlfT2">
    <location>
        <begin position="1"/>
        <end position="646"/>
    </location>
</feature>
<feature type="active site" description="Proton acceptor" evidence="1">
    <location>
        <position position="384"/>
    </location>
</feature>
<feature type="binding site" evidence="1">
    <location>
        <position position="182"/>
    </location>
    <ligand>
        <name>UDP-alpha-D-galactofuranose</name>
        <dbReference type="ChEBI" id="CHEBI:66915"/>
    </ligand>
</feature>
<feature type="binding site" evidence="1">
    <location>
        <position position="211"/>
    </location>
    <ligand>
        <name>UDP-alpha-D-galactofuranose</name>
        <dbReference type="ChEBI" id="CHEBI:66915"/>
    </ligand>
</feature>
<feature type="binding site" evidence="1">
    <location>
        <position position="240"/>
    </location>
    <ligand>
        <name>UDP-alpha-D-galactofuranose</name>
        <dbReference type="ChEBI" id="CHEBI:66915"/>
    </ligand>
</feature>
<feature type="binding site" evidence="1">
    <location>
        <position position="267"/>
    </location>
    <ligand>
        <name>Mn(2+)</name>
        <dbReference type="ChEBI" id="CHEBI:29035"/>
    </ligand>
</feature>
<feature type="binding site" evidence="1">
    <location>
        <position position="267"/>
    </location>
    <ligand>
        <name>UDP-alpha-D-galactofuranose</name>
        <dbReference type="ChEBI" id="CHEBI:66915"/>
    </ligand>
</feature>
<feature type="binding site" evidence="1">
    <location>
        <position position="269"/>
    </location>
    <ligand>
        <name>Mn(2+)</name>
        <dbReference type="ChEBI" id="CHEBI:29035"/>
    </ligand>
</feature>
<feature type="binding site" evidence="1">
    <location>
        <position position="408"/>
    </location>
    <ligand>
        <name>Mn(2+)</name>
        <dbReference type="ChEBI" id="CHEBI:29035"/>
    </ligand>
</feature>
<proteinExistence type="inferred from homology"/>
<reference key="1">
    <citation type="submission" date="2006-10" db="EMBL/GenBank/DDBJ databases">
        <authorList>
            <person name="Fleischmann R.D."/>
            <person name="Dodson R.J."/>
            <person name="Haft D.H."/>
            <person name="Merkel J.S."/>
            <person name="Nelson W.C."/>
            <person name="Fraser C.M."/>
        </authorList>
    </citation>
    <scope>NUCLEOTIDE SEQUENCE [LARGE SCALE GENOMIC DNA]</scope>
    <source>
        <strain>ATCC 700084 / mc(2)155</strain>
    </source>
</reference>
<reference key="2">
    <citation type="journal article" date="2007" name="Genome Biol.">
        <title>Interrupted coding sequences in Mycobacterium smegmatis: authentic mutations or sequencing errors?</title>
        <authorList>
            <person name="Deshayes C."/>
            <person name="Perrodou E."/>
            <person name="Gallien S."/>
            <person name="Euphrasie D."/>
            <person name="Schaeffer C."/>
            <person name="Van-Dorsselaer A."/>
            <person name="Poch O."/>
            <person name="Lecompte O."/>
            <person name="Reyrat J.-M."/>
        </authorList>
    </citation>
    <scope>NUCLEOTIDE SEQUENCE [LARGE SCALE GENOMIC DNA]</scope>
    <source>
        <strain>ATCC 700084 / mc(2)155</strain>
    </source>
</reference>
<reference key="3">
    <citation type="journal article" date="2009" name="Genome Res.">
        <title>Ortho-proteogenomics: multiple proteomes investigation through orthology and a new MS-based protocol.</title>
        <authorList>
            <person name="Gallien S."/>
            <person name="Perrodou E."/>
            <person name="Carapito C."/>
            <person name="Deshayes C."/>
            <person name="Reyrat J.-M."/>
            <person name="Van Dorsselaer A."/>
            <person name="Poch O."/>
            <person name="Schaeffer C."/>
            <person name="Lecompte O."/>
        </authorList>
    </citation>
    <scope>NUCLEOTIDE SEQUENCE [LARGE SCALE GENOMIC DNA]</scope>
    <source>
        <strain>ATCC 700084 / mc(2)155</strain>
    </source>
</reference>
<protein>
    <recommendedName>
        <fullName evidence="1">Galactofuranosyltransferase GlfT2</fullName>
        <shortName evidence="1">GalTr 2</shortName>
        <ecNumber evidence="1">2.4.1.288</ecNumber>
    </recommendedName>
    <alternativeName>
        <fullName evidence="1">Arabinogalactan galactosyltransferase 2</fullName>
    </alternativeName>
    <alternativeName>
        <fullName evidence="1">Galactofuranosylgalactofuranosylrhamnosyl-N-acetylglucosaminyl-diphospho-decaprenol beta-1,5/1,6-galactofuranosyltransferase</fullName>
    </alternativeName>
    <alternativeName>
        <fullName evidence="1">Polymerizing galactofuranosyltransferase GlfT2</fullName>
    </alternativeName>
</protein>